<name>SEH1_YEAST</name>
<keyword id="KW-0002">3D-structure</keyword>
<keyword id="KW-0903">Direct protein sequencing</keyword>
<keyword id="KW-0472">Membrane</keyword>
<keyword id="KW-0509">mRNA transport</keyword>
<keyword id="KW-0906">Nuclear pore complex</keyword>
<keyword id="KW-0539">Nucleus</keyword>
<keyword id="KW-0597">Phosphoprotein</keyword>
<keyword id="KW-0653">Protein transport</keyword>
<keyword id="KW-1185">Reference proteome</keyword>
<keyword id="KW-0677">Repeat</keyword>
<keyword id="KW-0811">Translocation</keyword>
<keyword id="KW-0813">Transport</keyword>
<keyword id="KW-0926">Vacuole</keyword>
<keyword id="KW-0853">WD repeat</keyword>
<feature type="chain" id="PRO_0000051215" description="Nucleoporin SEH1">
    <location>
        <begin position="1"/>
        <end position="349"/>
    </location>
</feature>
<feature type="repeat" description="WD 1">
    <location>
        <begin position="7"/>
        <end position="46"/>
    </location>
</feature>
<feature type="repeat" description="WD 2">
    <location>
        <begin position="53"/>
        <end position="94"/>
    </location>
</feature>
<feature type="repeat" description="WD 3">
    <location>
        <begin position="106"/>
        <end position="147"/>
    </location>
</feature>
<feature type="repeat" description="WD 4">
    <location>
        <begin position="153"/>
        <end position="192"/>
    </location>
</feature>
<feature type="repeat" description="WD 5">
    <location>
        <begin position="210"/>
        <end position="253"/>
    </location>
</feature>
<feature type="repeat" description="WD 6">
    <location>
        <begin position="302"/>
        <end position="341"/>
    </location>
</feature>
<feature type="region of interest" description="Disordered" evidence="1">
    <location>
        <begin position="263"/>
        <end position="285"/>
    </location>
</feature>
<feature type="compositionally biased region" description="Basic and acidic residues" evidence="1">
    <location>
        <begin position="274"/>
        <end position="285"/>
    </location>
</feature>
<feature type="modified residue" description="Phosphoserine" evidence="9">
    <location>
        <position position="257"/>
    </location>
</feature>
<feature type="strand" evidence="10">
    <location>
        <begin position="12"/>
        <end position="17"/>
    </location>
</feature>
<feature type="strand" evidence="10">
    <location>
        <begin position="19"/>
        <end position="28"/>
    </location>
</feature>
<feature type="strand" evidence="10">
    <location>
        <begin position="31"/>
        <end position="38"/>
    </location>
</feature>
<feature type="strand" evidence="10">
    <location>
        <begin position="40"/>
        <end position="42"/>
    </location>
</feature>
<feature type="strand" evidence="10">
    <location>
        <begin position="45"/>
        <end position="52"/>
    </location>
</feature>
<feature type="strand" evidence="10">
    <location>
        <begin position="58"/>
        <end position="63"/>
    </location>
</feature>
<feature type="helix" evidence="10">
    <location>
        <begin position="66"/>
        <end position="68"/>
    </location>
</feature>
<feature type="strand" evidence="10">
    <location>
        <begin position="70"/>
        <end position="76"/>
    </location>
</feature>
<feature type="strand" evidence="11">
    <location>
        <begin position="77"/>
        <end position="79"/>
    </location>
</feature>
<feature type="strand" evidence="10">
    <location>
        <begin position="81"/>
        <end position="86"/>
    </location>
</feature>
<feature type="strand" evidence="12">
    <location>
        <begin position="88"/>
        <end position="90"/>
    </location>
</feature>
<feature type="strand" evidence="10">
    <location>
        <begin position="97"/>
        <end position="104"/>
    </location>
</feature>
<feature type="strand" evidence="10">
    <location>
        <begin position="111"/>
        <end position="116"/>
    </location>
</feature>
<feature type="helix" evidence="10">
    <location>
        <begin position="119"/>
        <end position="121"/>
    </location>
</feature>
<feature type="strand" evidence="10">
    <location>
        <begin position="123"/>
        <end position="129"/>
    </location>
</feature>
<feature type="strand" evidence="10">
    <location>
        <begin position="133"/>
        <end position="138"/>
    </location>
</feature>
<feature type="strand" evidence="10">
    <location>
        <begin position="149"/>
        <end position="156"/>
    </location>
</feature>
<feature type="strand" evidence="12">
    <location>
        <begin position="157"/>
        <end position="159"/>
    </location>
</feature>
<feature type="strand" evidence="12">
    <location>
        <begin position="163"/>
        <end position="165"/>
    </location>
</feature>
<feature type="strand" evidence="10">
    <location>
        <begin position="169"/>
        <end position="173"/>
    </location>
</feature>
<feature type="strand" evidence="10">
    <location>
        <begin position="177"/>
        <end position="179"/>
    </location>
</feature>
<feature type="strand" evidence="10">
    <location>
        <begin position="182"/>
        <end position="187"/>
    </location>
</feature>
<feature type="strand" evidence="10">
    <location>
        <begin position="190"/>
        <end position="196"/>
    </location>
</feature>
<feature type="strand" evidence="10">
    <location>
        <begin position="202"/>
        <end position="207"/>
    </location>
</feature>
<feature type="strand" evidence="10">
    <location>
        <begin position="215"/>
        <end position="220"/>
    </location>
</feature>
<feature type="strand" evidence="10">
    <location>
        <begin position="227"/>
        <end position="235"/>
    </location>
</feature>
<feature type="strand" evidence="10">
    <location>
        <begin position="240"/>
        <end position="247"/>
    </location>
</feature>
<feature type="strand" evidence="10">
    <location>
        <begin position="291"/>
        <end position="300"/>
    </location>
</feature>
<feature type="strand" evidence="10">
    <location>
        <begin position="307"/>
        <end position="312"/>
    </location>
</feature>
<feature type="strand" evidence="10">
    <location>
        <begin position="314"/>
        <end position="316"/>
    </location>
</feature>
<feature type="strand" evidence="10">
    <location>
        <begin position="319"/>
        <end position="323"/>
    </location>
</feature>
<feature type="strand" evidence="10">
    <location>
        <begin position="328"/>
        <end position="333"/>
    </location>
</feature>
<feature type="strand" evidence="10">
    <location>
        <begin position="339"/>
        <end position="345"/>
    </location>
</feature>
<gene>
    <name type="primary">SEH1</name>
    <name type="ordered locus">YGL100W</name>
</gene>
<evidence type="ECO:0000256" key="1">
    <source>
        <dbReference type="SAM" id="MobiDB-lite"/>
    </source>
</evidence>
<evidence type="ECO:0000269" key="2">
    <source>
    </source>
</evidence>
<evidence type="ECO:0000269" key="3">
    <source>
    </source>
</evidence>
<evidence type="ECO:0000269" key="4">
    <source>
    </source>
</evidence>
<evidence type="ECO:0000269" key="5">
    <source>
    </source>
</evidence>
<evidence type="ECO:0000269" key="6">
    <source>
    </source>
</evidence>
<evidence type="ECO:0000269" key="7">
    <source>
    </source>
</evidence>
<evidence type="ECO:0000305" key="8"/>
<evidence type="ECO:0007744" key="9">
    <source>
    </source>
</evidence>
<evidence type="ECO:0007829" key="10">
    <source>
        <dbReference type="PDB" id="3F3F"/>
    </source>
</evidence>
<evidence type="ECO:0007829" key="11">
    <source>
        <dbReference type="PDB" id="3F3P"/>
    </source>
</evidence>
<evidence type="ECO:0007829" key="12">
    <source>
        <dbReference type="PDB" id="8ADL"/>
    </source>
</evidence>
<organism>
    <name type="scientific">Saccharomyces cerevisiae (strain ATCC 204508 / S288c)</name>
    <name type="common">Baker's yeast</name>
    <dbReference type="NCBI Taxonomy" id="559292"/>
    <lineage>
        <taxon>Eukaryota</taxon>
        <taxon>Fungi</taxon>
        <taxon>Dikarya</taxon>
        <taxon>Ascomycota</taxon>
        <taxon>Saccharomycotina</taxon>
        <taxon>Saccharomycetes</taxon>
        <taxon>Saccharomycetales</taxon>
        <taxon>Saccharomycetaceae</taxon>
        <taxon>Saccharomyces</taxon>
    </lineage>
</organism>
<reference key="1">
    <citation type="journal article" date="1996" name="Cell">
        <title>A novel complex of nucleoporins, which includes Sec13p and a Sec13p homolog, is essential for normal nuclear pores.</title>
        <authorList>
            <person name="Siniossoglou S."/>
            <person name="Wimmer C."/>
            <person name="Rieger M."/>
            <person name="Doye V."/>
            <person name="Tekotte H."/>
            <person name="Weise C."/>
            <person name="Emig S."/>
            <person name="Segref A."/>
            <person name="Hurt E.C."/>
        </authorList>
    </citation>
    <scope>NUCLEOTIDE SEQUENCE [GENOMIC DNA]</scope>
    <scope>PROTEIN SEQUENCE OF 116-121 AND 136-146</scope>
    <scope>FUNCTION IN NUCLEAR MRNA EXPORT</scope>
</reference>
<reference key="2">
    <citation type="journal article" date="1997" name="Nature">
        <title>The nucleotide sequence of Saccharomyces cerevisiae chromosome VII.</title>
        <authorList>
            <person name="Tettelin H."/>
            <person name="Agostoni-Carbone M.L."/>
            <person name="Albermann K."/>
            <person name="Albers M."/>
            <person name="Arroyo J."/>
            <person name="Backes U."/>
            <person name="Barreiros T."/>
            <person name="Bertani I."/>
            <person name="Bjourson A.J."/>
            <person name="Brueckner M."/>
            <person name="Bruschi C.V."/>
            <person name="Carignani G."/>
            <person name="Castagnoli L."/>
            <person name="Cerdan E."/>
            <person name="Clemente M.L."/>
            <person name="Coblenz A."/>
            <person name="Coglievina M."/>
            <person name="Coissac E."/>
            <person name="Defoor E."/>
            <person name="Del Bino S."/>
            <person name="Delius H."/>
            <person name="Delneri D."/>
            <person name="de Wergifosse P."/>
            <person name="Dujon B."/>
            <person name="Durand P."/>
            <person name="Entian K.-D."/>
            <person name="Eraso P."/>
            <person name="Escribano V."/>
            <person name="Fabiani L."/>
            <person name="Fartmann B."/>
            <person name="Feroli F."/>
            <person name="Feuermann M."/>
            <person name="Frontali L."/>
            <person name="Garcia-Gonzalez M."/>
            <person name="Garcia-Saez M.I."/>
            <person name="Goffeau A."/>
            <person name="Guerreiro P."/>
            <person name="Hani J."/>
            <person name="Hansen M."/>
            <person name="Hebling U."/>
            <person name="Hernandez K."/>
            <person name="Heumann K."/>
            <person name="Hilger F."/>
            <person name="Hofmann B."/>
            <person name="Indge K.J."/>
            <person name="James C.M."/>
            <person name="Klima R."/>
            <person name="Koetter P."/>
            <person name="Kramer B."/>
            <person name="Kramer W."/>
            <person name="Lauquin G."/>
            <person name="Leuther H."/>
            <person name="Louis E.J."/>
            <person name="Maillier E."/>
            <person name="Marconi A."/>
            <person name="Martegani E."/>
            <person name="Mazon M.J."/>
            <person name="Mazzoni C."/>
            <person name="McReynolds A.D.K."/>
            <person name="Melchioretto P."/>
            <person name="Mewes H.-W."/>
            <person name="Minenkova O."/>
            <person name="Mueller-Auer S."/>
            <person name="Nawrocki A."/>
            <person name="Netter P."/>
            <person name="Neu R."/>
            <person name="Nombela C."/>
            <person name="Oliver S.G."/>
            <person name="Panzeri L."/>
            <person name="Paoluzi S."/>
            <person name="Plevani P."/>
            <person name="Portetelle D."/>
            <person name="Portillo F."/>
            <person name="Potier S."/>
            <person name="Purnelle B."/>
            <person name="Rieger M."/>
            <person name="Riles L."/>
            <person name="Rinaldi T."/>
            <person name="Robben J."/>
            <person name="Rodrigues-Pousada C."/>
            <person name="Rodriguez-Belmonte E."/>
            <person name="Rodriguez-Torres A.M."/>
            <person name="Rose M."/>
            <person name="Ruzzi M."/>
            <person name="Saliola M."/>
            <person name="Sanchez-Perez M."/>
            <person name="Schaefer B."/>
            <person name="Schaefer M."/>
            <person name="Scharfe M."/>
            <person name="Schmidheini T."/>
            <person name="Schreer A."/>
            <person name="Skala J."/>
            <person name="Souciet J.-L."/>
            <person name="Steensma H.Y."/>
            <person name="Talla E."/>
            <person name="Thierry A."/>
            <person name="Vandenbol M."/>
            <person name="van der Aart Q.J.M."/>
            <person name="Van Dyck L."/>
            <person name="Vanoni M."/>
            <person name="Verhasselt P."/>
            <person name="Voet M."/>
            <person name="Volckaert G."/>
            <person name="Wambutt R."/>
            <person name="Watson M.D."/>
            <person name="Weber N."/>
            <person name="Wedler E."/>
            <person name="Wedler H."/>
            <person name="Wipfli P."/>
            <person name="Wolf K."/>
            <person name="Wright L.F."/>
            <person name="Zaccaria P."/>
            <person name="Zimmermann M."/>
            <person name="Zollner A."/>
            <person name="Kleine K."/>
        </authorList>
    </citation>
    <scope>NUCLEOTIDE SEQUENCE [LARGE SCALE GENOMIC DNA]</scope>
    <source>
        <strain>ATCC 204508 / S288c</strain>
    </source>
</reference>
<reference key="3">
    <citation type="journal article" date="2014" name="G3 (Bethesda)">
        <title>The reference genome sequence of Saccharomyces cerevisiae: Then and now.</title>
        <authorList>
            <person name="Engel S.R."/>
            <person name="Dietrich F.S."/>
            <person name="Fisk D.G."/>
            <person name="Binkley G."/>
            <person name="Balakrishnan R."/>
            <person name="Costanzo M.C."/>
            <person name="Dwight S.S."/>
            <person name="Hitz B.C."/>
            <person name="Karra K."/>
            <person name="Nash R.S."/>
            <person name="Weng S."/>
            <person name="Wong E.D."/>
            <person name="Lloyd P."/>
            <person name="Skrzypek M.S."/>
            <person name="Miyasato S.R."/>
            <person name="Simison M."/>
            <person name="Cherry J.M."/>
        </authorList>
    </citation>
    <scope>GENOME REANNOTATION</scope>
    <source>
        <strain>ATCC 204508 / S288c</strain>
    </source>
</reference>
<reference key="4">
    <citation type="journal article" date="2007" name="Genome Res.">
        <title>Approaching a complete repository of sequence-verified protein-encoding clones for Saccharomyces cerevisiae.</title>
        <authorList>
            <person name="Hu Y."/>
            <person name="Rolfs A."/>
            <person name="Bhullar B."/>
            <person name="Murthy T.V.S."/>
            <person name="Zhu C."/>
            <person name="Berger M.F."/>
            <person name="Camargo A.A."/>
            <person name="Kelley F."/>
            <person name="McCarron S."/>
            <person name="Jepson D."/>
            <person name="Richardson A."/>
            <person name="Raphael J."/>
            <person name="Moreira D."/>
            <person name="Taycher E."/>
            <person name="Zuo D."/>
            <person name="Mohr S."/>
            <person name="Kane M.F."/>
            <person name="Williamson J."/>
            <person name="Simpson A.J.G."/>
            <person name="Bulyk M.L."/>
            <person name="Harlow E."/>
            <person name="Marsischky G."/>
            <person name="Kolodner R.D."/>
            <person name="LaBaer J."/>
        </authorList>
    </citation>
    <scope>NUCLEOTIDE SEQUENCE [GENOMIC DNA]</scope>
    <source>
        <strain>ATCC 204508 / S288c</strain>
    </source>
</reference>
<reference key="5">
    <citation type="journal article" date="2000" name="J. Cell Biol.">
        <title>The yeast nuclear pore complex: composition, architecture, and transport mechanism.</title>
        <authorList>
            <person name="Rout M.P."/>
            <person name="Aitchison J.D."/>
            <person name="Suprapto A."/>
            <person name="Hjertaas K."/>
            <person name="Zhao Y."/>
            <person name="Chait B.T."/>
        </authorList>
    </citation>
    <scope>FUNCTION</scope>
    <scope>IDENTIFICATION IN THE NUCLEAR PORE COMPLEX</scope>
    <scope>SUBCELLULAR LOCATION</scope>
</reference>
<reference key="6">
    <citation type="journal article" date="2002" name="EMBO J.">
        <title>Modular self-assembly of a Y-shaped multiprotein complex from seven nucleoporins.</title>
        <authorList>
            <person name="Lutzmann M."/>
            <person name="Kunze R."/>
            <person name="Buerer A."/>
            <person name="Aebi U."/>
            <person name="Hurt E.C."/>
        </authorList>
    </citation>
    <scope>FUNCTION</scope>
    <scope>NUP84 NPC SUBCOMPLEX ASSEMBLY/STRUCTURE</scope>
</reference>
<reference key="7">
    <citation type="journal article" date="2002" name="J. Mol. Biol.">
        <title>Genome-wide nuclear morphology screen identifies novel genes involved in nuclear architecture and gene-silencing in Saccharomyces cerevisiae.</title>
        <authorList>
            <person name="Teixeira M.T."/>
            <person name="Dujon B."/>
            <person name="Fabre E."/>
        </authorList>
    </citation>
    <scope>FUNCTION</scope>
    <scope>NUCLEAR MORPHOLOGY</scope>
</reference>
<reference key="8">
    <citation type="journal article" date="2003" name="Dev. Cell">
        <title>Peering through the pore: nuclear pore complex structure, assembly, and function.</title>
        <authorList>
            <person name="Suntharalingam M."/>
            <person name="Wente S.R."/>
        </authorList>
    </citation>
    <scope>REVIEW</scope>
</reference>
<reference key="9">
    <citation type="journal article" date="2003" name="Nature">
        <title>Global analysis of protein expression in yeast.</title>
        <authorList>
            <person name="Ghaemmaghami S."/>
            <person name="Huh W.-K."/>
            <person name="Bower K."/>
            <person name="Howson R.W."/>
            <person name="Belle A."/>
            <person name="Dephoure N."/>
            <person name="O'Shea E.K."/>
            <person name="Weissman J.S."/>
        </authorList>
    </citation>
    <scope>LEVEL OF PROTEIN EXPRESSION [LARGE SCALE ANALYSIS]</scope>
</reference>
<reference key="10">
    <citation type="journal article" date="2008" name="Mol. Cell. Proteomics">
        <title>A multidimensional chromatography technology for in-depth phosphoproteome analysis.</title>
        <authorList>
            <person name="Albuquerque C.P."/>
            <person name="Smolka M.B."/>
            <person name="Payne S.H."/>
            <person name="Bafna V."/>
            <person name="Eng J."/>
            <person name="Zhou H."/>
        </authorList>
    </citation>
    <scope>PHOSPHORYLATION [LARGE SCALE ANALYSIS] AT SER-257</scope>
    <scope>IDENTIFICATION BY MASS SPECTROMETRY [LARGE SCALE ANALYSIS]</scope>
</reference>
<reference key="11">
    <citation type="journal article" date="2009" name="Science">
        <title>Global analysis of Cdk1 substrate phosphorylation sites provides insights into evolution.</title>
        <authorList>
            <person name="Holt L.J."/>
            <person name="Tuch B.B."/>
            <person name="Villen J."/>
            <person name="Johnson A.D."/>
            <person name="Gygi S.P."/>
            <person name="Morgan D.O."/>
        </authorList>
    </citation>
    <scope>IDENTIFICATION BY MASS SPECTROMETRY [LARGE SCALE ANALYSIS]</scope>
</reference>
<reference key="12">
    <citation type="journal article" date="2011" name="Mol. Cell. Proteomics">
        <title>A conserved coatomer-related complex containing Sec13 and Seh1 dynamically associates with the vacuole in Saccharomyces cerevisiae.</title>
        <authorList>
            <person name="Dokudovskaya S."/>
            <person name="Waharte F."/>
            <person name="Schlessinger A."/>
            <person name="Pieper U."/>
            <person name="Devos D.P."/>
            <person name="Cristea I.M."/>
            <person name="Williams R."/>
            <person name="Salamero J."/>
            <person name="Chait B.T."/>
            <person name="Sali A."/>
            <person name="Field M.C."/>
            <person name="Rout M.P."/>
            <person name="Dargemont C."/>
        </authorList>
    </citation>
    <scope>SUBCELLULAR LOCATION</scope>
    <scope>IDENTIFICATION IN THE SEA COMPLEX</scope>
    <scope>FUNCTION</scope>
</reference>
<dbReference type="EMBL" id="X90994">
    <property type="protein sequence ID" value="CAA62480.1"/>
    <property type="molecule type" value="Genomic_DNA"/>
</dbReference>
<dbReference type="EMBL" id="Z72622">
    <property type="protein sequence ID" value="CAA96806.1"/>
    <property type="molecule type" value="Genomic_DNA"/>
</dbReference>
<dbReference type="EMBL" id="AY558497">
    <property type="protein sequence ID" value="AAS56823.1"/>
    <property type="molecule type" value="Genomic_DNA"/>
</dbReference>
<dbReference type="EMBL" id="BK006941">
    <property type="protein sequence ID" value="DAA08006.1"/>
    <property type="molecule type" value="Genomic_DNA"/>
</dbReference>
<dbReference type="PIR" id="S62137">
    <property type="entry name" value="S62137"/>
</dbReference>
<dbReference type="RefSeq" id="NP_011415.1">
    <property type="nucleotide sequence ID" value="NM_001180965.1"/>
</dbReference>
<dbReference type="PDB" id="3EWE">
    <property type="method" value="X-ray"/>
    <property type="resolution" value="3.50 A"/>
    <property type="chains" value="A/C=1-349"/>
</dbReference>
<dbReference type="PDB" id="3F3F">
    <property type="method" value="X-ray"/>
    <property type="resolution" value="2.90 A"/>
    <property type="chains" value="A/B/E/F=1-349"/>
</dbReference>
<dbReference type="PDB" id="3F3G">
    <property type="method" value="X-ray"/>
    <property type="resolution" value="3.75 A"/>
    <property type="chains" value="A/B/E/F=1-349"/>
</dbReference>
<dbReference type="PDB" id="3F3P">
    <property type="method" value="X-ray"/>
    <property type="resolution" value="3.20 A"/>
    <property type="chains" value="A/B/E/F/I/J=1-349"/>
</dbReference>
<dbReference type="PDB" id="4XMM">
    <property type="method" value="X-ray"/>
    <property type="resolution" value="7.38 A"/>
    <property type="chains" value="C=1-349"/>
</dbReference>
<dbReference type="PDB" id="6X08">
    <property type="method" value="X-ray"/>
    <property type="resolution" value="4.19 A"/>
    <property type="chains" value="A=1-349"/>
</dbReference>
<dbReference type="PDB" id="7N84">
    <property type="method" value="EM"/>
    <property type="resolution" value="11.60 A"/>
    <property type="chains" value="e/p=1-349"/>
</dbReference>
<dbReference type="PDB" id="7N9F">
    <property type="method" value="EM"/>
    <property type="resolution" value="37.00 A"/>
    <property type="chains" value="e/l=1-349"/>
</dbReference>
<dbReference type="PDB" id="8ADL">
    <property type="method" value="EM"/>
    <property type="resolution" value="2.95 A"/>
    <property type="chains" value="D/E/F/L/M/N=1-349"/>
</dbReference>
<dbReference type="PDB" id="8TIE">
    <property type="method" value="EM"/>
    <property type="resolution" value="8.10 A"/>
    <property type="chains" value="e/p=1-349"/>
</dbReference>
<dbReference type="PDBsum" id="3EWE"/>
<dbReference type="PDBsum" id="3F3F"/>
<dbReference type="PDBsum" id="3F3G"/>
<dbReference type="PDBsum" id="3F3P"/>
<dbReference type="PDBsum" id="4XMM"/>
<dbReference type="PDBsum" id="6X08"/>
<dbReference type="PDBsum" id="7N84"/>
<dbReference type="PDBsum" id="7N9F"/>
<dbReference type="PDBsum" id="8ADL"/>
<dbReference type="PDBsum" id="8TIE"/>
<dbReference type="EMDB" id="EMD-15364"/>
<dbReference type="EMDB" id="EMD-24231"/>
<dbReference type="EMDB" id="EMD-24258"/>
<dbReference type="EMDB" id="EMD-41285"/>
<dbReference type="SMR" id="P53011"/>
<dbReference type="BioGRID" id="33149">
    <property type="interactions" value="414"/>
</dbReference>
<dbReference type="ComplexPortal" id="CPX-3231">
    <property type="entry name" value="SEA complex"/>
</dbReference>
<dbReference type="ComplexPortal" id="CPX-824">
    <property type="entry name" value="Nuclear pore complex"/>
</dbReference>
<dbReference type="DIP" id="DIP-4193N"/>
<dbReference type="FunCoup" id="P53011">
    <property type="interactions" value="1419"/>
</dbReference>
<dbReference type="IntAct" id="P53011">
    <property type="interactions" value="48"/>
</dbReference>
<dbReference type="MINT" id="P53011"/>
<dbReference type="STRING" id="4932.YGL100W"/>
<dbReference type="TCDB" id="1.I.1.1.1">
    <property type="family name" value="the nuclear pore complex (npc) family"/>
</dbReference>
<dbReference type="iPTMnet" id="P53011"/>
<dbReference type="PaxDb" id="4932-YGL100W"/>
<dbReference type="PeptideAtlas" id="P53011"/>
<dbReference type="EnsemblFungi" id="YGL100W_mRNA">
    <property type="protein sequence ID" value="YGL100W"/>
    <property type="gene ID" value="YGL100W"/>
</dbReference>
<dbReference type="GeneID" id="852778"/>
<dbReference type="KEGG" id="sce:YGL100W"/>
<dbReference type="AGR" id="SGD:S000003068"/>
<dbReference type="SGD" id="S000003068">
    <property type="gene designation" value="SEH1"/>
</dbReference>
<dbReference type="VEuPathDB" id="FungiDB:YGL100W"/>
<dbReference type="eggNOG" id="KOG2445">
    <property type="taxonomic scope" value="Eukaryota"/>
</dbReference>
<dbReference type="GeneTree" id="ENSGT00940000153393"/>
<dbReference type="HOGENOM" id="CLU_032441_1_1_1"/>
<dbReference type="InParanoid" id="P53011"/>
<dbReference type="OMA" id="NAPTRRW"/>
<dbReference type="OrthoDB" id="5566198at2759"/>
<dbReference type="BioCyc" id="YEAST:G3O-30600-MONOMER"/>
<dbReference type="Reactome" id="R-SCE-159236">
    <property type="pathway name" value="Transport of Mature mRNA derived from an Intron-Containing Transcript"/>
</dbReference>
<dbReference type="Reactome" id="R-SCE-3371453">
    <property type="pathway name" value="Regulation of HSF1-mediated heat shock response"/>
</dbReference>
<dbReference type="Reactome" id="R-SCE-4085377">
    <property type="pathway name" value="SUMOylation of SUMOylation proteins"/>
</dbReference>
<dbReference type="Reactome" id="R-SCE-4551638">
    <property type="pathway name" value="SUMOylation of chromatin organization proteins"/>
</dbReference>
<dbReference type="Reactome" id="R-SCE-4570464">
    <property type="pathway name" value="SUMOylation of RNA binding proteins"/>
</dbReference>
<dbReference type="BioGRID-ORCS" id="852778">
    <property type="hits" value="3 hits in 10 CRISPR screens"/>
</dbReference>
<dbReference type="CD-CODE" id="E03F929F">
    <property type="entry name" value="Stress granule"/>
</dbReference>
<dbReference type="EvolutionaryTrace" id="P53011"/>
<dbReference type="PRO" id="PR:P53011"/>
<dbReference type="Proteomes" id="UP000002311">
    <property type="component" value="Chromosome VII"/>
</dbReference>
<dbReference type="RNAct" id="P53011">
    <property type="molecule type" value="protein"/>
</dbReference>
<dbReference type="GO" id="GO:0005635">
    <property type="term" value="C:nuclear envelope"/>
    <property type="evidence" value="ECO:0000303"/>
    <property type="project" value="ComplexPortal"/>
</dbReference>
<dbReference type="GO" id="GO:0031965">
    <property type="term" value="C:nuclear membrane"/>
    <property type="evidence" value="ECO:0007669"/>
    <property type="project" value="UniProtKB-SubCell"/>
</dbReference>
<dbReference type="GO" id="GO:0005643">
    <property type="term" value="C:nuclear pore"/>
    <property type="evidence" value="ECO:0000314"/>
    <property type="project" value="SGD"/>
</dbReference>
<dbReference type="GO" id="GO:0031080">
    <property type="term" value="C:nuclear pore outer ring"/>
    <property type="evidence" value="ECO:0000314"/>
    <property type="project" value="SGD"/>
</dbReference>
<dbReference type="GO" id="GO:0035859">
    <property type="term" value="C:Seh1-associated complex"/>
    <property type="evidence" value="ECO:0000314"/>
    <property type="project" value="SGD"/>
</dbReference>
<dbReference type="GO" id="GO:0005774">
    <property type="term" value="C:vacuolar membrane"/>
    <property type="evidence" value="ECO:0000303"/>
    <property type="project" value="ComplexPortal"/>
</dbReference>
<dbReference type="GO" id="GO:0017056">
    <property type="term" value="F:structural constituent of nuclear pore"/>
    <property type="evidence" value="ECO:0000305"/>
    <property type="project" value="SGD"/>
</dbReference>
<dbReference type="GO" id="GO:0034198">
    <property type="term" value="P:cellular response to amino acid starvation"/>
    <property type="evidence" value="ECO:0000318"/>
    <property type="project" value="GO_Central"/>
</dbReference>
<dbReference type="GO" id="GO:0051028">
    <property type="term" value="P:mRNA transport"/>
    <property type="evidence" value="ECO:0007669"/>
    <property type="project" value="UniProtKB-KW"/>
</dbReference>
<dbReference type="GO" id="GO:0006913">
    <property type="term" value="P:nucleocytoplasmic transport"/>
    <property type="evidence" value="ECO:0000303"/>
    <property type="project" value="ComplexPortal"/>
</dbReference>
<dbReference type="GO" id="GO:1904263">
    <property type="term" value="P:positive regulation of TORC1 signaling"/>
    <property type="evidence" value="ECO:0000315"/>
    <property type="project" value="SGD"/>
</dbReference>
<dbReference type="GO" id="GO:0015031">
    <property type="term" value="P:protein transport"/>
    <property type="evidence" value="ECO:0007669"/>
    <property type="project" value="UniProtKB-KW"/>
</dbReference>
<dbReference type="GO" id="GO:1903432">
    <property type="term" value="P:regulation of TORC1 signaling"/>
    <property type="evidence" value="ECO:0000314"/>
    <property type="project" value="ComplexPortal"/>
</dbReference>
<dbReference type="Gene3D" id="2.130.10.10">
    <property type="entry name" value="YVTN repeat-like/Quinoprotein amine dehydrogenase"/>
    <property type="match status" value="1"/>
</dbReference>
<dbReference type="InterPro" id="IPR037363">
    <property type="entry name" value="Sec13/Seh1_fam"/>
</dbReference>
<dbReference type="InterPro" id="IPR015943">
    <property type="entry name" value="WD40/YVTN_repeat-like_dom_sf"/>
</dbReference>
<dbReference type="InterPro" id="IPR036322">
    <property type="entry name" value="WD40_repeat_dom_sf"/>
</dbReference>
<dbReference type="InterPro" id="IPR001680">
    <property type="entry name" value="WD40_rpt"/>
</dbReference>
<dbReference type="PANTHER" id="PTHR11024">
    <property type="entry name" value="NUCLEAR PORE COMPLEX PROTEIN SEC13 / SEH1 FAMILY MEMBER"/>
    <property type="match status" value="1"/>
</dbReference>
<dbReference type="PANTHER" id="PTHR11024:SF3">
    <property type="entry name" value="NUCLEOPORIN SEH1"/>
    <property type="match status" value="1"/>
</dbReference>
<dbReference type="Pfam" id="PF00400">
    <property type="entry name" value="WD40"/>
    <property type="match status" value="4"/>
</dbReference>
<dbReference type="SMART" id="SM00320">
    <property type="entry name" value="WD40"/>
    <property type="match status" value="5"/>
</dbReference>
<dbReference type="SUPFAM" id="SSF50978">
    <property type="entry name" value="WD40 repeat-like"/>
    <property type="match status" value="1"/>
</dbReference>
<dbReference type="PROSITE" id="PS50082">
    <property type="entry name" value="WD_REPEATS_2"/>
    <property type="match status" value="3"/>
</dbReference>
<dbReference type="PROSITE" id="PS50294">
    <property type="entry name" value="WD_REPEATS_REGION"/>
    <property type="match status" value="1"/>
</dbReference>
<sequence>MQPFDSGHDDLVHDVVYDFYGRHVATCSSDQHIKVFKLDKDTSNWELSDSWRAHDSSIVAIDWASPEYGRIIASASYDKTVKLWEEDPDQEECSGRRWNKLCTLNDSKGSLYSVKFAPAHLGLKLACLGNDGILRLYDALEPSDLRSWTLTSEMKVLSIPPANHLQSDFCLSWCPSRFSPEKLAVSALEQAIIYQRGKDGKLHVAAKLPGHKSLIRSISWAPSIGRWYQLIATGCKDGRIRIFKITEKLSPLASEESLTNSNMFDNSADVDMDAQGRSDSNTEEKAELQSNLQVELLSEHDDHNGEVWSVSWNLTGTILSSAGDDGKVRLWKATYSNEFKCMSVITAQQ</sequence>
<comment type="function">
    <text evidence="2 3 4 6 7">Functions as a component of the nuclear pore complex (NPC). NPC components, collectively referred to as nucleoporins (NUPs), can play the role of both NPC structural components and of docking or interaction partners for transiently associated nuclear transport factors. Involved in nuclear poly(A)+ RNA export and NPC biogenesis. It is also required for normal nuclear morphology. Component of the SEA complex which coats the vacuolar membrane and is involved in intracellular trafficking, autophagy, response to nitrogen starvation, and amino acid biogenesis.</text>
</comment>
<comment type="subunit">
    <text evidence="2 6">Component of the nuclear pore complex (NPC). NPC constitutes the exclusive means of nucleocytoplasmic transport. NPCs allow the passive diffusion of ions and small molecules and the active, nuclear transport receptor-mediated bidirectional transport of macromolecules such as proteins, RNAs, ribonucleoparticles (RNPs), and ribosomal subunits across the nuclear envelope. Due to its 8-fold rotational symmetry, all subunits are present with 8 copies or multiples thereof. SEH1 is part of the heptameric 0.5 MDa autoassembling NUP84 NPC subcomplex (NUP84, NUP85, NUP120, NUP133, NUP145C, SEC13 and SEH1). Component of the SEA complex composed of at least IML1/SEA1, RTC1/SEA2, MTC5/SEA3, NPR2, NPR3, SEA4, SEC13 and SEH1.</text>
</comment>
<comment type="interaction">
    <interactant intactId="EBI-16940">
        <id>P53011</id>
    </interactant>
    <interactant intactId="EBI-12345">
        <id>P46673</id>
        <label>NUP85</label>
    </interactant>
    <organismsDiffer>false</organismsDiffer>
    <experiments>11</experiments>
</comment>
<comment type="interaction">
    <interactant intactId="EBI-16940">
        <id>P53011</id>
    </interactant>
    <interactant intactId="EBI-21365">
        <id>P38164</id>
        <label>SEA4</label>
    </interactant>
    <organismsDiffer>false</organismsDiffer>
    <experiments>7</experiments>
</comment>
<comment type="subcellular location">
    <subcellularLocation>
        <location evidence="2">Nucleus</location>
        <location evidence="2">Nuclear pore complex</location>
    </subcellularLocation>
    <subcellularLocation>
        <location evidence="2">Nucleus membrane</location>
        <topology evidence="2">Peripheral membrane protein</topology>
        <orientation evidence="2">Cytoplasmic side</orientation>
    </subcellularLocation>
    <subcellularLocation>
        <location evidence="6">Vacuole membrane</location>
        <topology evidence="6">Peripheral membrane protein</topology>
    </subcellularLocation>
    <subcellularLocation>
        <location evidence="2">Nucleus membrane</location>
        <topology evidence="2">Peripheral membrane protein</topology>
        <orientation evidence="2">Nucleoplasmic side</orientation>
    </subcellularLocation>
    <text evidence="2">Symmetric distribution.</text>
</comment>
<comment type="miscellaneous">
    <text evidence="5">Present with 952 molecules/cell in log phase SD medium.</text>
</comment>
<comment type="similarity">
    <text evidence="8">Belongs to the WD repeat SEC13 family.</text>
</comment>
<proteinExistence type="evidence at protein level"/>
<protein>
    <recommendedName>
        <fullName>Nucleoporin SEH1</fullName>
    </recommendedName>
    <alternativeName>
        <fullName>Nuclear pore protein SEH1</fullName>
    </alternativeName>
    <alternativeName>
        <fullName>SEC13 homolog 1</fullName>
    </alternativeName>
</protein>
<accession>P53011</accession>
<accession>D6VU45</accession>